<reference key="1">
    <citation type="submission" date="2007-06" db="EMBL/GenBank/DDBJ databases">
        <authorList>
            <person name="Dodson R.J."/>
            <person name="Harkins D."/>
            <person name="Paulsen I.T."/>
        </authorList>
    </citation>
    <scope>NUCLEOTIDE SEQUENCE [LARGE SCALE GENOMIC DNA]</scope>
    <source>
        <strain>DSM 24068 / PA7</strain>
    </source>
</reference>
<organism>
    <name type="scientific">Pseudomonas paraeruginosa (strain DSM 24068 / PA7)</name>
    <name type="common">Pseudomonas aeruginosa (strain PA7)</name>
    <dbReference type="NCBI Taxonomy" id="381754"/>
    <lineage>
        <taxon>Bacteria</taxon>
        <taxon>Pseudomonadati</taxon>
        <taxon>Pseudomonadota</taxon>
        <taxon>Gammaproteobacteria</taxon>
        <taxon>Pseudomonadales</taxon>
        <taxon>Pseudomonadaceae</taxon>
        <taxon>Pseudomonas</taxon>
        <taxon>Pseudomonas paraeruginosa</taxon>
    </lineage>
</organism>
<sequence>MTNKIIQQIEAEQMNKEIPAFAPGDTVIVQVKVKEGDRQRLQAFEGVVIAKRNRGLNSAFTVRKISNGVGVERTFQTYSPIVDSLSVKRRGDVRKAKLYYLRALSGKAARIKEKLV</sequence>
<name>RL19_PSEP7</name>
<keyword id="KW-0687">Ribonucleoprotein</keyword>
<keyword id="KW-0689">Ribosomal protein</keyword>
<comment type="function">
    <text evidence="1">This protein is located at the 30S-50S ribosomal subunit interface and may play a role in the structure and function of the aminoacyl-tRNA binding site.</text>
</comment>
<comment type="similarity">
    <text evidence="1">Belongs to the bacterial ribosomal protein bL19 family.</text>
</comment>
<proteinExistence type="inferred from homology"/>
<gene>
    <name evidence="1" type="primary">rplS</name>
    <name type="ordered locus">PSPA7_1377</name>
</gene>
<evidence type="ECO:0000255" key="1">
    <source>
        <dbReference type="HAMAP-Rule" id="MF_00402"/>
    </source>
</evidence>
<evidence type="ECO:0000305" key="2"/>
<dbReference type="EMBL" id="CP000744">
    <property type="protein sequence ID" value="ABR82918.1"/>
    <property type="molecule type" value="Genomic_DNA"/>
</dbReference>
<dbReference type="RefSeq" id="WP_003092637.1">
    <property type="nucleotide sequence ID" value="NC_009656.1"/>
</dbReference>
<dbReference type="SMR" id="A6V126"/>
<dbReference type="GeneID" id="77219764"/>
<dbReference type="KEGG" id="pap:PSPA7_1377"/>
<dbReference type="HOGENOM" id="CLU_103507_2_1_6"/>
<dbReference type="Proteomes" id="UP000001582">
    <property type="component" value="Chromosome"/>
</dbReference>
<dbReference type="GO" id="GO:0022625">
    <property type="term" value="C:cytosolic large ribosomal subunit"/>
    <property type="evidence" value="ECO:0007669"/>
    <property type="project" value="TreeGrafter"/>
</dbReference>
<dbReference type="GO" id="GO:0003735">
    <property type="term" value="F:structural constituent of ribosome"/>
    <property type="evidence" value="ECO:0007669"/>
    <property type="project" value="InterPro"/>
</dbReference>
<dbReference type="GO" id="GO:0006412">
    <property type="term" value="P:translation"/>
    <property type="evidence" value="ECO:0007669"/>
    <property type="project" value="UniProtKB-UniRule"/>
</dbReference>
<dbReference type="FunFam" id="2.30.30.790:FF:000001">
    <property type="entry name" value="50S ribosomal protein L19"/>
    <property type="match status" value="1"/>
</dbReference>
<dbReference type="Gene3D" id="2.30.30.790">
    <property type="match status" value="1"/>
</dbReference>
<dbReference type="HAMAP" id="MF_00402">
    <property type="entry name" value="Ribosomal_bL19"/>
    <property type="match status" value="1"/>
</dbReference>
<dbReference type="InterPro" id="IPR001857">
    <property type="entry name" value="Ribosomal_bL19"/>
</dbReference>
<dbReference type="InterPro" id="IPR018257">
    <property type="entry name" value="Ribosomal_bL19_CS"/>
</dbReference>
<dbReference type="InterPro" id="IPR038657">
    <property type="entry name" value="Ribosomal_bL19_sf"/>
</dbReference>
<dbReference type="InterPro" id="IPR008991">
    <property type="entry name" value="Translation_prot_SH3-like_sf"/>
</dbReference>
<dbReference type="NCBIfam" id="TIGR01024">
    <property type="entry name" value="rplS_bact"/>
    <property type="match status" value="1"/>
</dbReference>
<dbReference type="PANTHER" id="PTHR15680:SF9">
    <property type="entry name" value="LARGE RIBOSOMAL SUBUNIT PROTEIN BL19M"/>
    <property type="match status" value="1"/>
</dbReference>
<dbReference type="PANTHER" id="PTHR15680">
    <property type="entry name" value="RIBOSOMAL PROTEIN L19"/>
    <property type="match status" value="1"/>
</dbReference>
<dbReference type="Pfam" id="PF01245">
    <property type="entry name" value="Ribosomal_L19"/>
    <property type="match status" value="1"/>
</dbReference>
<dbReference type="PIRSF" id="PIRSF002191">
    <property type="entry name" value="Ribosomal_L19"/>
    <property type="match status" value="1"/>
</dbReference>
<dbReference type="PRINTS" id="PR00061">
    <property type="entry name" value="RIBOSOMALL19"/>
</dbReference>
<dbReference type="SUPFAM" id="SSF50104">
    <property type="entry name" value="Translation proteins SH3-like domain"/>
    <property type="match status" value="1"/>
</dbReference>
<dbReference type="PROSITE" id="PS01015">
    <property type="entry name" value="RIBOSOMAL_L19"/>
    <property type="match status" value="1"/>
</dbReference>
<feature type="chain" id="PRO_1000049719" description="Large ribosomal subunit protein bL19">
    <location>
        <begin position="1"/>
        <end position="116"/>
    </location>
</feature>
<protein>
    <recommendedName>
        <fullName evidence="1">Large ribosomal subunit protein bL19</fullName>
    </recommendedName>
    <alternativeName>
        <fullName evidence="2">50S ribosomal protein L19</fullName>
    </alternativeName>
</protein>
<accession>A6V126</accession>